<proteinExistence type="inferred from homology"/>
<accession>Q3IT10</accession>
<protein>
    <recommendedName>
        <fullName evidence="1">1-(5-phosphoribosyl)-5-[(5-phosphoribosylamino)methylideneamino] imidazole-4-carboxamide isomerase</fullName>
        <ecNumber evidence="1">5.3.1.16</ecNumber>
    </recommendedName>
    <alternativeName>
        <fullName evidence="1">Phosphoribosylformimino-5-aminoimidazole carboxamide ribotide isomerase</fullName>
    </alternativeName>
</protein>
<gene>
    <name evidence="1" type="primary">hisA</name>
    <name type="ordered locus">NP_1268A</name>
</gene>
<organism>
    <name type="scientific">Natronomonas pharaonis (strain ATCC 35678 / DSM 2160 / CIP 103997 / JCM 8858 / NBRC 14720 / NCIMB 2260 / Gabara)</name>
    <name type="common">Halobacterium pharaonis</name>
    <dbReference type="NCBI Taxonomy" id="348780"/>
    <lineage>
        <taxon>Archaea</taxon>
        <taxon>Methanobacteriati</taxon>
        <taxon>Methanobacteriota</taxon>
        <taxon>Stenosarchaea group</taxon>
        <taxon>Halobacteria</taxon>
        <taxon>Halobacteriales</taxon>
        <taxon>Haloarculaceae</taxon>
        <taxon>Natronomonas</taxon>
    </lineage>
</organism>
<dbReference type="EC" id="5.3.1.16" evidence="1"/>
<dbReference type="EMBL" id="CR936257">
    <property type="protein sequence ID" value="CAI48725.1"/>
    <property type="molecule type" value="Genomic_DNA"/>
</dbReference>
<dbReference type="RefSeq" id="WP_011322360.1">
    <property type="nucleotide sequence ID" value="NC_007426.1"/>
</dbReference>
<dbReference type="SMR" id="Q3IT10"/>
<dbReference type="STRING" id="348780.NP_1268A"/>
<dbReference type="EnsemblBacteria" id="CAI48725">
    <property type="protein sequence ID" value="CAI48725"/>
    <property type="gene ID" value="NP_1268A"/>
</dbReference>
<dbReference type="GeneID" id="3702814"/>
<dbReference type="KEGG" id="nph:NP_1268A"/>
<dbReference type="eggNOG" id="arCOG00618">
    <property type="taxonomic scope" value="Archaea"/>
</dbReference>
<dbReference type="HOGENOM" id="CLU_048577_1_1_2"/>
<dbReference type="OrthoDB" id="52866at2157"/>
<dbReference type="UniPathway" id="UPA00031">
    <property type="reaction ID" value="UER00009"/>
</dbReference>
<dbReference type="Proteomes" id="UP000002698">
    <property type="component" value="Chromosome"/>
</dbReference>
<dbReference type="GO" id="GO:0005737">
    <property type="term" value="C:cytoplasm"/>
    <property type="evidence" value="ECO:0007669"/>
    <property type="project" value="UniProtKB-SubCell"/>
</dbReference>
<dbReference type="GO" id="GO:0003949">
    <property type="term" value="F:1-(5-phosphoribosyl)-5-[(5-phosphoribosylamino)methylideneamino]imidazole-4-carboxamide isomerase activity"/>
    <property type="evidence" value="ECO:0007669"/>
    <property type="project" value="UniProtKB-UniRule"/>
</dbReference>
<dbReference type="GO" id="GO:0000105">
    <property type="term" value="P:L-histidine biosynthetic process"/>
    <property type="evidence" value="ECO:0007669"/>
    <property type="project" value="UniProtKB-UniRule"/>
</dbReference>
<dbReference type="GO" id="GO:0000162">
    <property type="term" value="P:L-tryptophan biosynthetic process"/>
    <property type="evidence" value="ECO:0007669"/>
    <property type="project" value="TreeGrafter"/>
</dbReference>
<dbReference type="CDD" id="cd04732">
    <property type="entry name" value="HisA"/>
    <property type="match status" value="1"/>
</dbReference>
<dbReference type="FunFam" id="3.20.20.70:FF:000009">
    <property type="entry name" value="1-(5-phosphoribosyl)-5-[(5-phosphoribosylamino)methylideneamino] imidazole-4-carboxamide isomerase"/>
    <property type="match status" value="1"/>
</dbReference>
<dbReference type="Gene3D" id="3.20.20.70">
    <property type="entry name" value="Aldolase class I"/>
    <property type="match status" value="1"/>
</dbReference>
<dbReference type="HAMAP" id="MF_01014">
    <property type="entry name" value="HisA"/>
    <property type="match status" value="1"/>
</dbReference>
<dbReference type="InterPro" id="IPR013785">
    <property type="entry name" value="Aldolase_TIM"/>
</dbReference>
<dbReference type="InterPro" id="IPR006062">
    <property type="entry name" value="His_biosynth"/>
</dbReference>
<dbReference type="InterPro" id="IPR006063">
    <property type="entry name" value="HisA_bact_arch"/>
</dbReference>
<dbReference type="InterPro" id="IPR044524">
    <property type="entry name" value="Isoase_HisA-like"/>
</dbReference>
<dbReference type="InterPro" id="IPR023016">
    <property type="entry name" value="Isoase_HisA-like_bact"/>
</dbReference>
<dbReference type="InterPro" id="IPR011060">
    <property type="entry name" value="RibuloseP-bd_barrel"/>
</dbReference>
<dbReference type="NCBIfam" id="TIGR00007">
    <property type="entry name" value="1-(5-phosphoribosyl)-5-[(5-phosphoribosylamino)methylideneamino]imidazole-4-carboxamide isomerase"/>
    <property type="match status" value="1"/>
</dbReference>
<dbReference type="NCBIfam" id="NF010112">
    <property type="entry name" value="PRK13585.1"/>
    <property type="match status" value="1"/>
</dbReference>
<dbReference type="PANTHER" id="PTHR43090">
    <property type="entry name" value="1-(5-PHOSPHORIBOSYL)-5-[(5-PHOSPHORIBOSYLAMINO)METHYLIDENEAMINO] IMIDAZOLE-4-CARBOXAMIDE ISOMERASE"/>
    <property type="match status" value="1"/>
</dbReference>
<dbReference type="PANTHER" id="PTHR43090:SF7">
    <property type="entry name" value="1-(5-PHOSPHORIBOSYL)-5-[(5-PHOSPHORIBOSYLAMINO)METHYLIDENEAMINO] IMIDAZOLE-4-CARBOXAMIDE ISOMERASE"/>
    <property type="match status" value="1"/>
</dbReference>
<dbReference type="Pfam" id="PF00977">
    <property type="entry name" value="His_biosynth"/>
    <property type="match status" value="1"/>
</dbReference>
<dbReference type="SUPFAM" id="SSF51366">
    <property type="entry name" value="Ribulose-phoshate binding barrel"/>
    <property type="match status" value="1"/>
</dbReference>
<reference key="1">
    <citation type="journal article" date="2005" name="Genome Res.">
        <title>Living with two extremes: conclusions from the genome sequence of Natronomonas pharaonis.</title>
        <authorList>
            <person name="Falb M."/>
            <person name="Pfeiffer F."/>
            <person name="Palm P."/>
            <person name="Rodewald K."/>
            <person name="Hickmann V."/>
            <person name="Tittor J."/>
            <person name="Oesterhelt D."/>
        </authorList>
    </citation>
    <scope>NUCLEOTIDE SEQUENCE [LARGE SCALE GENOMIC DNA]</scope>
    <source>
        <strain>ATCC 35678 / DSM 2160 / CIP 103997 / JCM 8858 / NBRC 14720 / NCIMB 2260 / Gabara</strain>
    </source>
</reference>
<comment type="catalytic activity">
    <reaction evidence="1">
        <text>1-(5-phospho-beta-D-ribosyl)-5-[(5-phospho-beta-D-ribosylamino)methylideneamino]imidazole-4-carboxamide = 5-[(5-phospho-1-deoxy-D-ribulos-1-ylimino)methylamino]-1-(5-phospho-beta-D-ribosyl)imidazole-4-carboxamide</text>
        <dbReference type="Rhea" id="RHEA:15469"/>
        <dbReference type="ChEBI" id="CHEBI:58435"/>
        <dbReference type="ChEBI" id="CHEBI:58525"/>
        <dbReference type="EC" id="5.3.1.16"/>
    </reaction>
</comment>
<comment type="pathway">
    <text evidence="1">Amino-acid biosynthesis; L-histidine biosynthesis; L-histidine from 5-phospho-alpha-D-ribose 1-diphosphate: step 4/9.</text>
</comment>
<comment type="subcellular location">
    <subcellularLocation>
        <location evidence="1">Cytoplasm</location>
    </subcellularLocation>
</comment>
<comment type="similarity">
    <text evidence="1">Belongs to the HisA/HisF family.</text>
</comment>
<sequence length="239" mass="24424">MFPSFEVIPAVDMQDGQVVQLVGGERGTETEYGDPVAAAQRWVDAGAETLHLVDLDGAFEGERANADAVEAVLEATDVSVQLGGGIRTVDDADSLLSMGVDRVILGTAAVENPDIVGEINDRHPGSVVVSLDAKDGEVVVSGWTESTGLDPAEAAARYEAEGAGGVLFTDVDVEGQLSGVRADEIARVVDAVDIPVIASGGVSTLSDIEALKDAGAAATVVGTALYEGEFTLEEAAAVV</sequence>
<feature type="chain" id="PRO_0000229100" description="1-(5-phosphoribosyl)-5-[(5-phosphoribosylamino)methylideneamino] imidazole-4-carboxamide isomerase">
    <location>
        <begin position="1"/>
        <end position="239"/>
    </location>
</feature>
<feature type="active site" description="Proton acceptor" evidence="1">
    <location>
        <position position="12"/>
    </location>
</feature>
<feature type="active site" description="Proton donor" evidence="1">
    <location>
        <position position="132"/>
    </location>
</feature>
<evidence type="ECO:0000255" key="1">
    <source>
        <dbReference type="HAMAP-Rule" id="MF_01014"/>
    </source>
</evidence>
<keyword id="KW-0028">Amino-acid biosynthesis</keyword>
<keyword id="KW-0963">Cytoplasm</keyword>
<keyword id="KW-0368">Histidine biosynthesis</keyword>
<keyword id="KW-0413">Isomerase</keyword>
<keyword id="KW-1185">Reference proteome</keyword>
<name>HIS4_NATPD</name>